<name>PIGL_MOUSE</name>
<gene>
    <name type="primary">Pigl</name>
    <name type="synonym">Gm737</name>
</gene>
<evidence type="ECO:0000250" key="1">
    <source>
        <dbReference type="UniProtKB" id="O35790"/>
    </source>
</evidence>
<evidence type="ECO:0000250" key="2">
    <source>
        <dbReference type="UniProtKB" id="Q9Y2B2"/>
    </source>
</evidence>
<evidence type="ECO:0000255" key="3"/>
<evidence type="ECO:0000269" key="4">
    <source>
    </source>
</evidence>
<evidence type="ECO:0000305" key="5"/>
<proteinExistence type="evidence at transcript level"/>
<sequence length="252" mass="28183">MELVGFLCVAVAVLTWGFLRVWNSAERMRSPEQAGLPGAGSRALVVIAHPDDEAMFFAPTMLGLARLEQQVSLLCFSSGNYYNQGEIRKKELLQSCAVLGIPPSRVMIIDKRDFPDDPEVQWDTELVASTLLQHIHANGTDLVVTFDAEGVSGHSNHIALYKAVRALHSGGKLPKGCSVLTLQSVNALRKYAFLLDLPWTLLSPQDVLFVLTSKEVAQAKKAMSCHRSQLLWFRYLYVLFSRYMRINSLRFL</sequence>
<protein>
    <recommendedName>
        <fullName>N-acetylglucosaminyl-phosphatidylinositol de-N-acetylase</fullName>
        <ecNumber evidence="1">3.5.1.89</ecNumber>
    </recommendedName>
    <alternativeName>
        <fullName>Phosphatidylinositol-glycan biosynthesis class L protein</fullName>
        <shortName>PIG-L</shortName>
    </alternativeName>
</protein>
<reference key="1">
    <citation type="journal article" date="2005" name="Science">
        <title>The transcriptional landscape of the mammalian genome.</title>
        <authorList>
            <person name="Carninci P."/>
            <person name="Kasukawa T."/>
            <person name="Katayama S."/>
            <person name="Gough J."/>
            <person name="Frith M.C."/>
            <person name="Maeda N."/>
            <person name="Oyama R."/>
            <person name="Ravasi T."/>
            <person name="Lenhard B."/>
            <person name="Wells C."/>
            <person name="Kodzius R."/>
            <person name="Shimokawa K."/>
            <person name="Bajic V.B."/>
            <person name="Brenner S.E."/>
            <person name="Batalov S."/>
            <person name="Forrest A.R."/>
            <person name="Zavolan M."/>
            <person name="Davis M.J."/>
            <person name="Wilming L.G."/>
            <person name="Aidinis V."/>
            <person name="Allen J.E."/>
            <person name="Ambesi-Impiombato A."/>
            <person name="Apweiler R."/>
            <person name="Aturaliya R.N."/>
            <person name="Bailey T.L."/>
            <person name="Bansal M."/>
            <person name="Baxter L."/>
            <person name="Beisel K.W."/>
            <person name="Bersano T."/>
            <person name="Bono H."/>
            <person name="Chalk A.M."/>
            <person name="Chiu K.P."/>
            <person name="Choudhary V."/>
            <person name="Christoffels A."/>
            <person name="Clutterbuck D.R."/>
            <person name="Crowe M.L."/>
            <person name="Dalla E."/>
            <person name="Dalrymple B.P."/>
            <person name="de Bono B."/>
            <person name="Della Gatta G."/>
            <person name="di Bernardo D."/>
            <person name="Down T."/>
            <person name="Engstrom P."/>
            <person name="Fagiolini M."/>
            <person name="Faulkner G."/>
            <person name="Fletcher C.F."/>
            <person name="Fukushima T."/>
            <person name="Furuno M."/>
            <person name="Futaki S."/>
            <person name="Gariboldi M."/>
            <person name="Georgii-Hemming P."/>
            <person name="Gingeras T.R."/>
            <person name="Gojobori T."/>
            <person name="Green R.E."/>
            <person name="Gustincich S."/>
            <person name="Harbers M."/>
            <person name="Hayashi Y."/>
            <person name="Hensch T.K."/>
            <person name="Hirokawa N."/>
            <person name="Hill D."/>
            <person name="Huminiecki L."/>
            <person name="Iacono M."/>
            <person name="Ikeo K."/>
            <person name="Iwama A."/>
            <person name="Ishikawa T."/>
            <person name="Jakt M."/>
            <person name="Kanapin A."/>
            <person name="Katoh M."/>
            <person name="Kawasawa Y."/>
            <person name="Kelso J."/>
            <person name="Kitamura H."/>
            <person name="Kitano H."/>
            <person name="Kollias G."/>
            <person name="Krishnan S.P."/>
            <person name="Kruger A."/>
            <person name="Kummerfeld S.K."/>
            <person name="Kurochkin I.V."/>
            <person name="Lareau L.F."/>
            <person name="Lazarevic D."/>
            <person name="Lipovich L."/>
            <person name="Liu J."/>
            <person name="Liuni S."/>
            <person name="McWilliam S."/>
            <person name="Madan Babu M."/>
            <person name="Madera M."/>
            <person name="Marchionni L."/>
            <person name="Matsuda H."/>
            <person name="Matsuzawa S."/>
            <person name="Miki H."/>
            <person name="Mignone F."/>
            <person name="Miyake S."/>
            <person name="Morris K."/>
            <person name="Mottagui-Tabar S."/>
            <person name="Mulder N."/>
            <person name="Nakano N."/>
            <person name="Nakauchi H."/>
            <person name="Ng P."/>
            <person name="Nilsson R."/>
            <person name="Nishiguchi S."/>
            <person name="Nishikawa S."/>
            <person name="Nori F."/>
            <person name="Ohara O."/>
            <person name="Okazaki Y."/>
            <person name="Orlando V."/>
            <person name="Pang K.C."/>
            <person name="Pavan W.J."/>
            <person name="Pavesi G."/>
            <person name="Pesole G."/>
            <person name="Petrovsky N."/>
            <person name="Piazza S."/>
            <person name="Reed J."/>
            <person name="Reid J.F."/>
            <person name="Ring B.Z."/>
            <person name="Ringwald M."/>
            <person name="Rost B."/>
            <person name="Ruan Y."/>
            <person name="Salzberg S.L."/>
            <person name="Sandelin A."/>
            <person name="Schneider C."/>
            <person name="Schoenbach C."/>
            <person name="Sekiguchi K."/>
            <person name="Semple C.A."/>
            <person name="Seno S."/>
            <person name="Sessa L."/>
            <person name="Sheng Y."/>
            <person name="Shibata Y."/>
            <person name="Shimada H."/>
            <person name="Shimada K."/>
            <person name="Silva D."/>
            <person name="Sinclair B."/>
            <person name="Sperling S."/>
            <person name="Stupka E."/>
            <person name="Sugiura K."/>
            <person name="Sultana R."/>
            <person name="Takenaka Y."/>
            <person name="Taki K."/>
            <person name="Tammoja K."/>
            <person name="Tan S.L."/>
            <person name="Tang S."/>
            <person name="Taylor M.S."/>
            <person name="Tegner J."/>
            <person name="Teichmann S.A."/>
            <person name="Ueda H.R."/>
            <person name="van Nimwegen E."/>
            <person name="Verardo R."/>
            <person name="Wei C.L."/>
            <person name="Yagi K."/>
            <person name="Yamanishi H."/>
            <person name="Zabarovsky E."/>
            <person name="Zhu S."/>
            <person name="Zimmer A."/>
            <person name="Hide W."/>
            <person name="Bult C."/>
            <person name="Grimmond S.M."/>
            <person name="Teasdale R.D."/>
            <person name="Liu E.T."/>
            <person name="Brusic V."/>
            <person name="Quackenbush J."/>
            <person name="Wahlestedt C."/>
            <person name="Mattick J.S."/>
            <person name="Hume D.A."/>
            <person name="Kai C."/>
            <person name="Sasaki D."/>
            <person name="Tomaru Y."/>
            <person name="Fukuda S."/>
            <person name="Kanamori-Katayama M."/>
            <person name="Suzuki M."/>
            <person name="Aoki J."/>
            <person name="Arakawa T."/>
            <person name="Iida J."/>
            <person name="Imamura K."/>
            <person name="Itoh M."/>
            <person name="Kato T."/>
            <person name="Kawaji H."/>
            <person name="Kawagashira N."/>
            <person name="Kawashima T."/>
            <person name="Kojima M."/>
            <person name="Kondo S."/>
            <person name="Konno H."/>
            <person name="Nakano K."/>
            <person name="Ninomiya N."/>
            <person name="Nishio T."/>
            <person name="Okada M."/>
            <person name="Plessy C."/>
            <person name="Shibata K."/>
            <person name="Shiraki T."/>
            <person name="Suzuki S."/>
            <person name="Tagami M."/>
            <person name="Waki K."/>
            <person name="Watahiki A."/>
            <person name="Okamura-Oho Y."/>
            <person name="Suzuki H."/>
            <person name="Kawai J."/>
            <person name="Hayashizaki Y."/>
        </authorList>
    </citation>
    <scope>NUCLEOTIDE SEQUENCE [LARGE SCALE MRNA]</scope>
    <source>
        <strain>C57BL/6J</strain>
        <tissue>Inner ear</tissue>
    </source>
</reference>
<reference key="2">
    <citation type="journal article" date="2009" name="PLoS Biol.">
        <title>Lineage-specific biology revealed by a finished genome assembly of the mouse.</title>
        <authorList>
            <person name="Church D.M."/>
            <person name="Goodstadt L."/>
            <person name="Hillier L.W."/>
            <person name="Zody M.C."/>
            <person name="Goldstein S."/>
            <person name="She X."/>
            <person name="Bult C.J."/>
            <person name="Agarwala R."/>
            <person name="Cherry J.L."/>
            <person name="DiCuccio M."/>
            <person name="Hlavina W."/>
            <person name="Kapustin Y."/>
            <person name="Meric P."/>
            <person name="Maglott D."/>
            <person name="Birtle Z."/>
            <person name="Marques A.C."/>
            <person name="Graves T."/>
            <person name="Zhou S."/>
            <person name="Teague B."/>
            <person name="Potamousis K."/>
            <person name="Churas C."/>
            <person name="Place M."/>
            <person name="Herschleb J."/>
            <person name="Runnheim R."/>
            <person name="Forrest D."/>
            <person name="Amos-Landgraf J."/>
            <person name="Schwartz D.C."/>
            <person name="Cheng Z."/>
            <person name="Lindblad-Toh K."/>
            <person name="Eichler E.E."/>
            <person name="Ponting C.P."/>
        </authorList>
    </citation>
    <scope>NUCLEOTIDE SEQUENCE [LARGE SCALE GENOMIC DNA]</scope>
    <source>
        <strain>C57BL/6J</strain>
    </source>
</reference>
<reference key="3">
    <citation type="journal article" date="2018" name="Nature">
        <title>Placentation defects are highly prevalent in embryonic lethal mouse mutants.</title>
        <authorList>
            <person name="Perez-Garcia V."/>
            <person name="Fineberg E."/>
            <person name="Wilson R."/>
            <person name="Murray A."/>
            <person name="Mazzeo C.I."/>
            <person name="Tudor C."/>
            <person name="Sienerth A."/>
            <person name="White J.K."/>
            <person name="Tuck E."/>
            <person name="Ryder E.J."/>
            <person name="Gleeson D."/>
            <person name="Siragher E."/>
            <person name="Wardle-Jones H."/>
            <person name="Staudt N."/>
            <person name="Wali N."/>
            <person name="Collins J."/>
            <person name="Geyer S."/>
            <person name="Busch-Nentwich E.M."/>
            <person name="Galli A."/>
            <person name="Smith J.C."/>
            <person name="Robertson E."/>
            <person name="Adams D.J."/>
            <person name="Weninger W.J."/>
            <person name="Mohun T."/>
            <person name="Hemberger M."/>
        </authorList>
    </citation>
    <scope>DISRUPTION PHENOTYPE</scope>
</reference>
<feature type="chain" id="PRO_0000307824" description="N-acetylglucosaminyl-phosphatidylinositol de-N-acetylase">
    <location>
        <begin position="1"/>
        <end position="252"/>
    </location>
</feature>
<feature type="transmembrane region" description="Helical" evidence="3">
    <location>
        <begin position="2"/>
        <end position="22"/>
    </location>
</feature>
<feature type="topological domain" description="Cytoplasmic" evidence="1">
    <location>
        <begin position="23"/>
        <end position="252"/>
    </location>
</feature>
<keyword id="KW-0256">Endoplasmic reticulum</keyword>
<keyword id="KW-0337">GPI-anchor biosynthesis</keyword>
<keyword id="KW-0378">Hydrolase</keyword>
<keyword id="KW-0443">Lipid metabolism</keyword>
<keyword id="KW-0472">Membrane</keyword>
<keyword id="KW-1185">Reference proteome</keyword>
<keyword id="KW-0812">Transmembrane</keyword>
<keyword id="KW-1133">Transmembrane helix</keyword>
<accession>Q5SX19</accession>
<dbReference type="EC" id="3.5.1.89" evidence="1"/>
<dbReference type="EMBL" id="AK158149">
    <property type="protein sequence ID" value="BAE34385.1"/>
    <property type="molecule type" value="mRNA"/>
</dbReference>
<dbReference type="EMBL" id="AL596181">
    <property type="status" value="NOT_ANNOTATED_CDS"/>
    <property type="molecule type" value="Genomic_DNA"/>
</dbReference>
<dbReference type="EMBL" id="BX248411">
    <property type="status" value="NOT_ANNOTATED_CDS"/>
    <property type="molecule type" value="Genomic_DNA"/>
</dbReference>
<dbReference type="EMBL" id="BX470084">
    <property type="status" value="NOT_ANNOTATED_CDS"/>
    <property type="molecule type" value="Genomic_DNA"/>
</dbReference>
<dbReference type="CCDS" id="CCDS24824.1"/>
<dbReference type="RefSeq" id="NP_001034625.1">
    <property type="nucleotide sequence ID" value="NM_001039536.4"/>
</dbReference>
<dbReference type="SMR" id="Q5SX19"/>
<dbReference type="BioGRID" id="236510">
    <property type="interactions" value="1"/>
</dbReference>
<dbReference type="FunCoup" id="Q5SX19">
    <property type="interactions" value="2059"/>
</dbReference>
<dbReference type="STRING" id="10090.ENSMUSP00000014389"/>
<dbReference type="PhosphoSitePlus" id="Q5SX19"/>
<dbReference type="PaxDb" id="10090-ENSMUSP00000014389"/>
<dbReference type="ProteomicsDB" id="288208"/>
<dbReference type="Antibodypedia" id="2335">
    <property type="antibodies" value="116 antibodies from 19 providers"/>
</dbReference>
<dbReference type="DNASU" id="327942"/>
<dbReference type="Ensembl" id="ENSMUST00000014389.6">
    <property type="protein sequence ID" value="ENSMUSP00000014389.6"/>
    <property type="gene ID" value="ENSMUSG00000014245.9"/>
</dbReference>
<dbReference type="GeneID" id="327942"/>
<dbReference type="KEGG" id="mmu:327942"/>
<dbReference type="UCSC" id="uc007jje.1">
    <property type="organism name" value="mouse"/>
</dbReference>
<dbReference type="AGR" id="MGI:2681271"/>
<dbReference type="CTD" id="9487"/>
<dbReference type="MGI" id="MGI:2681271">
    <property type="gene designation" value="Pigl"/>
</dbReference>
<dbReference type="VEuPathDB" id="HostDB:ENSMUSG00000014245"/>
<dbReference type="eggNOG" id="KOG3332">
    <property type="taxonomic scope" value="Eukaryota"/>
</dbReference>
<dbReference type="GeneTree" id="ENSGT00390000018434"/>
<dbReference type="HOGENOM" id="CLU_034979_1_0_1"/>
<dbReference type="InParanoid" id="Q5SX19"/>
<dbReference type="OMA" id="YVLESVN"/>
<dbReference type="OrthoDB" id="440160at2759"/>
<dbReference type="PhylomeDB" id="Q5SX19"/>
<dbReference type="TreeFam" id="TF315150"/>
<dbReference type="Reactome" id="R-MMU-162710">
    <property type="pathway name" value="Synthesis of glycosylphosphatidylinositol (GPI)"/>
</dbReference>
<dbReference type="UniPathway" id="UPA00196"/>
<dbReference type="BioGRID-ORCS" id="327942">
    <property type="hits" value="13 hits in 81 CRISPR screens"/>
</dbReference>
<dbReference type="ChiTaRS" id="Pigl">
    <property type="organism name" value="mouse"/>
</dbReference>
<dbReference type="PRO" id="PR:Q5SX19"/>
<dbReference type="Proteomes" id="UP000000589">
    <property type="component" value="Chromosome 11"/>
</dbReference>
<dbReference type="RNAct" id="Q5SX19">
    <property type="molecule type" value="protein"/>
</dbReference>
<dbReference type="Bgee" id="ENSMUSG00000014245">
    <property type="expression patterns" value="Expressed in otolith organ and 219 other cell types or tissues"/>
</dbReference>
<dbReference type="GO" id="GO:0005789">
    <property type="term" value="C:endoplasmic reticulum membrane"/>
    <property type="evidence" value="ECO:0000250"/>
    <property type="project" value="UniProtKB"/>
</dbReference>
<dbReference type="GO" id="GO:0000225">
    <property type="term" value="F:N-acetylglucosaminylphosphatidylinositol deacetylase activity"/>
    <property type="evidence" value="ECO:0000250"/>
    <property type="project" value="UniProtKB"/>
</dbReference>
<dbReference type="GO" id="GO:0006506">
    <property type="term" value="P:GPI anchor biosynthetic process"/>
    <property type="evidence" value="ECO:0000250"/>
    <property type="project" value="UniProtKB"/>
</dbReference>
<dbReference type="FunFam" id="3.40.50.10320:FF:000002">
    <property type="entry name" value="Probable N-acetylglucosaminyl-phosphatidylinositol de-N-acetylase"/>
    <property type="match status" value="1"/>
</dbReference>
<dbReference type="Gene3D" id="3.40.50.10320">
    <property type="entry name" value="LmbE-like"/>
    <property type="match status" value="1"/>
</dbReference>
<dbReference type="InterPro" id="IPR003737">
    <property type="entry name" value="GlcNAc_PI_deacetylase-related"/>
</dbReference>
<dbReference type="InterPro" id="IPR024078">
    <property type="entry name" value="LmbE-like_dom_sf"/>
</dbReference>
<dbReference type="PANTHER" id="PTHR12993:SF11">
    <property type="entry name" value="N-ACETYLGLUCOSAMINYL-PHOSPHATIDYLINOSITOL DE-N-ACETYLASE"/>
    <property type="match status" value="1"/>
</dbReference>
<dbReference type="PANTHER" id="PTHR12993">
    <property type="entry name" value="N-ACETYLGLUCOSAMINYL-PHOSPHATIDYLINOSITOL DE-N-ACETYLASE-RELATED"/>
    <property type="match status" value="1"/>
</dbReference>
<dbReference type="Pfam" id="PF02585">
    <property type="entry name" value="PIG-L"/>
    <property type="match status" value="1"/>
</dbReference>
<dbReference type="SUPFAM" id="SSF102588">
    <property type="entry name" value="LmbE-like"/>
    <property type="match status" value="1"/>
</dbReference>
<comment type="function">
    <text evidence="1">Catalyzes the second step of glycosylphosphatidylinositol (GPI) biosynthesis, which is the de-N-acetylation of N-acetylglucosaminyl-phosphatidylinositol.</text>
</comment>
<comment type="catalytic activity">
    <reaction evidence="1">
        <text>a 6-(N-acetyl-alpha-D-glucosaminyl)-1-(1,2-diacyl-sn-glycero-3-phospho)-1D-myo-inositol + H2O = a 6-(alpha-D-glucosaminyl)-1-(1,2-diacyl-sn-glycero-3-phospho)-1D-myo-inositol + acetate</text>
        <dbReference type="Rhea" id="RHEA:11660"/>
        <dbReference type="ChEBI" id="CHEBI:15377"/>
        <dbReference type="ChEBI" id="CHEBI:30089"/>
        <dbReference type="ChEBI" id="CHEBI:57265"/>
        <dbReference type="ChEBI" id="CHEBI:57997"/>
        <dbReference type="EC" id="3.5.1.89"/>
    </reaction>
    <physiologicalReaction direction="left-to-right" evidence="1">
        <dbReference type="Rhea" id="RHEA:11661"/>
    </physiologicalReaction>
</comment>
<comment type="pathway">
    <text evidence="1">Glycolipid biosynthesis; glycosylphosphatidylinositol-anchor biosynthesis.</text>
</comment>
<comment type="subcellular location">
    <subcellularLocation>
        <location evidence="1">Endoplasmic reticulum membrane</location>
        <topology evidence="1">Single-pass type I membrane protein</topology>
    </subcellularLocation>
</comment>
<comment type="domain">
    <text evidence="2">Retained in the ER by two retention signals, one located in cytoplasmic domain, and a second signal in transmembrane domain that is functional in the presence of membrane proximal residues of the cytoplasmic tail.</text>
</comment>
<comment type="disruption phenotype">
    <text evidence="4">Deficient mice exhibit early lethality (9.5-10.5 dpc) and is associated with severe placental malformations.</text>
</comment>
<comment type="similarity">
    <text evidence="5">Belongs to the PIGL family.</text>
</comment>
<organism>
    <name type="scientific">Mus musculus</name>
    <name type="common">Mouse</name>
    <dbReference type="NCBI Taxonomy" id="10090"/>
    <lineage>
        <taxon>Eukaryota</taxon>
        <taxon>Metazoa</taxon>
        <taxon>Chordata</taxon>
        <taxon>Craniata</taxon>
        <taxon>Vertebrata</taxon>
        <taxon>Euteleostomi</taxon>
        <taxon>Mammalia</taxon>
        <taxon>Eutheria</taxon>
        <taxon>Euarchontoglires</taxon>
        <taxon>Glires</taxon>
        <taxon>Rodentia</taxon>
        <taxon>Myomorpha</taxon>
        <taxon>Muroidea</taxon>
        <taxon>Muridae</taxon>
        <taxon>Murinae</taxon>
        <taxon>Mus</taxon>
        <taxon>Mus</taxon>
    </lineage>
</organism>